<proteinExistence type="evidence at protein level"/>
<feature type="signal peptide" evidence="1">
    <location>
        <begin position="1"/>
        <end position="17"/>
    </location>
</feature>
<feature type="chain" id="PRO_0000010374" description="FXYD domain-containing ion transport regulator 6">
    <location>
        <begin position="18"/>
        <end position="94"/>
    </location>
</feature>
<feature type="topological domain" description="Extracellular" evidence="3">
    <location>
        <begin position="18"/>
        <end position="34"/>
    </location>
</feature>
<feature type="transmembrane region" description="Helical" evidence="2">
    <location>
        <begin position="35"/>
        <end position="57"/>
    </location>
</feature>
<feature type="topological domain" description="Cytoplasmic" evidence="3">
    <location>
        <begin position="58"/>
        <end position="94"/>
    </location>
</feature>
<feature type="splice variant" id="VSP_001585" description="In isoform 2." evidence="4 5">
    <location>
        <position position="20"/>
    </location>
</feature>
<reference key="1">
    <citation type="submission" date="1999-08" db="EMBL/GenBank/DDBJ databases">
        <title>A novel PLM-like ion channel gene expressed in the nervous system.</title>
        <authorList>
            <person name="Saito S."/>
            <person name="Matoba R."/>
            <person name="Kato K."/>
            <person name="Matsubara K."/>
        </authorList>
    </citation>
    <scope>NUCLEOTIDE SEQUENCE [MRNA] (ISOFORM 1)</scope>
    <source>
        <strain>C57BL/6J</strain>
        <tissue>Cerebellum</tissue>
    </source>
</reference>
<reference key="2">
    <citation type="journal article" date="2005" name="Science">
        <title>The transcriptional landscape of the mammalian genome.</title>
        <authorList>
            <person name="Carninci P."/>
            <person name="Kasukawa T."/>
            <person name="Katayama S."/>
            <person name="Gough J."/>
            <person name="Frith M.C."/>
            <person name="Maeda N."/>
            <person name="Oyama R."/>
            <person name="Ravasi T."/>
            <person name="Lenhard B."/>
            <person name="Wells C."/>
            <person name="Kodzius R."/>
            <person name="Shimokawa K."/>
            <person name="Bajic V.B."/>
            <person name="Brenner S.E."/>
            <person name="Batalov S."/>
            <person name="Forrest A.R."/>
            <person name="Zavolan M."/>
            <person name="Davis M.J."/>
            <person name="Wilming L.G."/>
            <person name="Aidinis V."/>
            <person name="Allen J.E."/>
            <person name="Ambesi-Impiombato A."/>
            <person name="Apweiler R."/>
            <person name="Aturaliya R.N."/>
            <person name="Bailey T.L."/>
            <person name="Bansal M."/>
            <person name="Baxter L."/>
            <person name="Beisel K.W."/>
            <person name="Bersano T."/>
            <person name="Bono H."/>
            <person name="Chalk A.M."/>
            <person name="Chiu K.P."/>
            <person name="Choudhary V."/>
            <person name="Christoffels A."/>
            <person name="Clutterbuck D.R."/>
            <person name="Crowe M.L."/>
            <person name="Dalla E."/>
            <person name="Dalrymple B.P."/>
            <person name="de Bono B."/>
            <person name="Della Gatta G."/>
            <person name="di Bernardo D."/>
            <person name="Down T."/>
            <person name="Engstrom P."/>
            <person name="Fagiolini M."/>
            <person name="Faulkner G."/>
            <person name="Fletcher C.F."/>
            <person name="Fukushima T."/>
            <person name="Furuno M."/>
            <person name="Futaki S."/>
            <person name="Gariboldi M."/>
            <person name="Georgii-Hemming P."/>
            <person name="Gingeras T.R."/>
            <person name="Gojobori T."/>
            <person name="Green R.E."/>
            <person name="Gustincich S."/>
            <person name="Harbers M."/>
            <person name="Hayashi Y."/>
            <person name="Hensch T.K."/>
            <person name="Hirokawa N."/>
            <person name="Hill D."/>
            <person name="Huminiecki L."/>
            <person name="Iacono M."/>
            <person name="Ikeo K."/>
            <person name="Iwama A."/>
            <person name="Ishikawa T."/>
            <person name="Jakt M."/>
            <person name="Kanapin A."/>
            <person name="Katoh M."/>
            <person name="Kawasawa Y."/>
            <person name="Kelso J."/>
            <person name="Kitamura H."/>
            <person name="Kitano H."/>
            <person name="Kollias G."/>
            <person name="Krishnan S.P."/>
            <person name="Kruger A."/>
            <person name="Kummerfeld S.K."/>
            <person name="Kurochkin I.V."/>
            <person name="Lareau L.F."/>
            <person name="Lazarevic D."/>
            <person name="Lipovich L."/>
            <person name="Liu J."/>
            <person name="Liuni S."/>
            <person name="McWilliam S."/>
            <person name="Madan Babu M."/>
            <person name="Madera M."/>
            <person name="Marchionni L."/>
            <person name="Matsuda H."/>
            <person name="Matsuzawa S."/>
            <person name="Miki H."/>
            <person name="Mignone F."/>
            <person name="Miyake S."/>
            <person name="Morris K."/>
            <person name="Mottagui-Tabar S."/>
            <person name="Mulder N."/>
            <person name="Nakano N."/>
            <person name="Nakauchi H."/>
            <person name="Ng P."/>
            <person name="Nilsson R."/>
            <person name="Nishiguchi S."/>
            <person name="Nishikawa S."/>
            <person name="Nori F."/>
            <person name="Ohara O."/>
            <person name="Okazaki Y."/>
            <person name="Orlando V."/>
            <person name="Pang K.C."/>
            <person name="Pavan W.J."/>
            <person name="Pavesi G."/>
            <person name="Pesole G."/>
            <person name="Petrovsky N."/>
            <person name="Piazza S."/>
            <person name="Reed J."/>
            <person name="Reid J.F."/>
            <person name="Ring B.Z."/>
            <person name="Ringwald M."/>
            <person name="Rost B."/>
            <person name="Ruan Y."/>
            <person name="Salzberg S.L."/>
            <person name="Sandelin A."/>
            <person name="Schneider C."/>
            <person name="Schoenbach C."/>
            <person name="Sekiguchi K."/>
            <person name="Semple C.A."/>
            <person name="Seno S."/>
            <person name="Sessa L."/>
            <person name="Sheng Y."/>
            <person name="Shibata Y."/>
            <person name="Shimada H."/>
            <person name="Shimada K."/>
            <person name="Silva D."/>
            <person name="Sinclair B."/>
            <person name="Sperling S."/>
            <person name="Stupka E."/>
            <person name="Sugiura K."/>
            <person name="Sultana R."/>
            <person name="Takenaka Y."/>
            <person name="Taki K."/>
            <person name="Tammoja K."/>
            <person name="Tan S.L."/>
            <person name="Tang S."/>
            <person name="Taylor M.S."/>
            <person name="Tegner J."/>
            <person name="Teichmann S.A."/>
            <person name="Ueda H.R."/>
            <person name="van Nimwegen E."/>
            <person name="Verardo R."/>
            <person name="Wei C.L."/>
            <person name="Yagi K."/>
            <person name="Yamanishi H."/>
            <person name="Zabarovsky E."/>
            <person name="Zhu S."/>
            <person name="Zimmer A."/>
            <person name="Hide W."/>
            <person name="Bult C."/>
            <person name="Grimmond S.M."/>
            <person name="Teasdale R.D."/>
            <person name="Liu E.T."/>
            <person name="Brusic V."/>
            <person name="Quackenbush J."/>
            <person name="Wahlestedt C."/>
            <person name="Mattick J.S."/>
            <person name="Hume D.A."/>
            <person name="Kai C."/>
            <person name="Sasaki D."/>
            <person name="Tomaru Y."/>
            <person name="Fukuda S."/>
            <person name="Kanamori-Katayama M."/>
            <person name="Suzuki M."/>
            <person name="Aoki J."/>
            <person name="Arakawa T."/>
            <person name="Iida J."/>
            <person name="Imamura K."/>
            <person name="Itoh M."/>
            <person name="Kato T."/>
            <person name="Kawaji H."/>
            <person name="Kawagashira N."/>
            <person name="Kawashima T."/>
            <person name="Kojima M."/>
            <person name="Kondo S."/>
            <person name="Konno H."/>
            <person name="Nakano K."/>
            <person name="Ninomiya N."/>
            <person name="Nishio T."/>
            <person name="Okada M."/>
            <person name="Plessy C."/>
            <person name="Shibata K."/>
            <person name="Shiraki T."/>
            <person name="Suzuki S."/>
            <person name="Tagami M."/>
            <person name="Waki K."/>
            <person name="Watahiki A."/>
            <person name="Okamura-Oho Y."/>
            <person name="Suzuki H."/>
            <person name="Kawai J."/>
            <person name="Hayashizaki Y."/>
        </authorList>
    </citation>
    <scope>NUCLEOTIDE SEQUENCE [LARGE SCALE MRNA] (ISOFORMS 1 AND 2)</scope>
    <source>
        <strain>C57BL/6J</strain>
        <tissue>Embryo</tissue>
    </source>
</reference>
<reference key="3">
    <citation type="journal article" date="2004" name="Genome Res.">
        <title>The status, quality, and expansion of the NIH full-length cDNA project: the Mammalian Gene Collection (MGC).</title>
        <authorList>
            <consortium name="The MGC Project Team"/>
        </authorList>
    </citation>
    <scope>NUCLEOTIDE SEQUENCE [LARGE SCALE MRNA] (ISOFORMS 1 AND 2)</scope>
    <source>
        <strain>FVB/N</strain>
        <tissue>Brain</tissue>
    </source>
</reference>
<reference key="4">
    <citation type="submission" date="2007-04" db="UniProtKB">
        <authorList>
            <person name="Lubec G."/>
            <person name="Kang S.U."/>
        </authorList>
    </citation>
    <scope>PROTEIN SEQUENCE OF 25-37 AND 70-91</scope>
    <scope>IDENTIFICATION BY MASS SPECTROMETRY</scope>
    <source>
        <strain>C57BL/6J</strain>
        <tissue>Brain</tissue>
    </source>
</reference>
<reference key="5">
    <citation type="journal article" date="2010" name="Cell">
        <title>A tissue-specific atlas of mouse protein phosphorylation and expression.</title>
        <authorList>
            <person name="Huttlin E.L."/>
            <person name="Jedrychowski M.P."/>
            <person name="Elias J.E."/>
            <person name="Goswami T."/>
            <person name="Rad R."/>
            <person name="Beausoleil S.A."/>
            <person name="Villen J."/>
            <person name="Haas W."/>
            <person name="Sowa M.E."/>
            <person name="Gygi S.P."/>
        </authorList>
    </citation>
    <scope>IDENTIFICATION BY MASS SPECTROMETRY [LARGE SCALE ANALYSIS]</scope>
    <source>
        <tissue>Brain</tissue>
        <tissue>Testis</tissue>
    </source>
</reference>
<keyword id="KW-0025">Alternative splicing</keyword>
<keyword id="KW-1003">Cell membrane</keyword>
<keyword id="KW-0903">Direct protein sequencing</keyword>
<keyword id="KW-0406">Ion transport</keyword>
<keyword id="KW-0472">Membrane</keyword>
<keyword id="KW-0630">Potassium</keyword>
<keyword id="KW-0633">Potassium transport</keyword>
<keyword id="KW-1185">Reference proteome</keyword>
<keyword id="KW-0732">Signal</keyword>
<keyword id="KW-0915">Sodium</keyword>
<keyword id="KW-0739">Sodium transport</keyword>
<keyword id="KW-0740">Sodium/potassium transport</keyword>
<keyword id="KW-0812">Transmembrane</keyword>
<keyword id="KW-1133">Transmembrane helix</keyword>
<keyword id="KW-0813">Transport</keyword>
<comment type="function">
    <text evidence="1 2">Associates with and regulates the activity of the sodium/potassium-transporting ATPase (NKA) which catalyzes the hydrolysis of ATP coupled with the exchange of Na(+) and K(+) ions across the plasma membrane. Reduces the apparent affinity for intracellular Na(+) with no change in the apparent affinity for extracellular K(+) (By similarity). In addition to modulating NKA kinetics, may also function as a regulator of NKA localization to the plasma membrane (By similarity).</text>
</comment>
<comment type="subunit">
    <text evidence="2">Regulatory subunit of the sodium/potassium-transporting ATPase which is composed of a catalytic alpha subunit, a non-catalytic beta subunit and an additional regulatory subunit. The regulatory subunit, a member of the FXYD protein family, modulates the enzymatic activity in a tissue- and isoform-specific way by changing affinities of the Na+/K+-ATPase toward Na(+), K(+) or ATP.</text>
</comment>
<comment type="subcellular location">
    <subcellularLocation>
        <location evidence="1">Cell membrane</location>
        <topology evidence="6">Single-pass type I membrane protein</topology>
    </subcellularLocation>
</comment>
<comment type="alternative products">
    <event type="alternative splicing"/>
    <isoform>
        <id>Q9D164-1</id>
        <name>1</name>
        <sequence type="displayed"/>
    </isoform>
    <isoform>
        <id>Q9D164-2</id>
        <name>2</name>
        <sequence type="described" ref="VSP_001585"/>
    </isoform>
</comment>
<comment type="similarity">
    <text evidence="6">Belongs to the FXYD family.</text>
</comment>
<protein>
    <recommendedName>
        <fullName>FXYD domain-containing ion transport regulator 6</fullName>
    </recommendedName>
    <alternativeName>
        <fullName>PLM-like protein</fullName>
    </alternativeName>
    <alternativeName>
        <fullName>Phosphohippolin</fullName>
    </alternativeName>
</protein>
<accession>Q9D164</accession>
<accession>Q99NC3</accession>
<accession>Q9CXD0</accession>
<sequence>METVLVLCSLLAPVVLASAAEKEKEKDPFYYDYQTLRIGGLVFAVVLFSVGILLILSRRCKCSFNQKPRAPGDEEAQVENLITTNAAEPQKAEN</sequence>
<organism>
    <name type="scientific">Mus musculus</name>
    <name type="common">Mouse</name>
    <dbReference type="NCBI Taxonomy" id="10090"/>
    <lineage>
        <taxon>Eukaryota</taxon>
        <taxon>Metazoa</taxon>
        <taxon>Chordata</taxon>
        <taxon>Craniata</taxon>
        <taxon>Vertebrata</taxon>
        <taxon>Euteleostomi</taxon>
        <taxon>Mammalia</taxon>
        <taxon>Eutheria</taxon>
        <taxon>Euarchontoglires</taxon>
        <taxon>Glires</taxon>
        <taxon>Rodentia</taxon>
        <taxon>Myomorpha</taxon>
        <taxon>Muroidea</taxon>
        <taxon>Muridae</taxon>
        <taxon>Murinae</taxon>
        <taxon>Mus</taxon>
        <taxon>Mus</taxon>
    </lineage>
</organism>
<evidence type="ECO:0000250" key="1">
    <source>
        <dbReference type="UniProtKB" id="Q91XV6"/>
    </source>
</evidence>
<evidence type="ECO:0000250" key="2">
    <source>
        <dbReference type="UniProtKB" id="Q9H0Q3"/>
    </source>
</evidence>
<evidence type="ECO:0000255" key="3"/>
<evidence type="ECO:0000303" key="4">
    <source>
    </source>
</evidence>
<evidence type="ECO:0000303" key="5">
    <source>
    </source>
</evidence>
<evidence type="ECO:0000305" key="6"/>
<dbReference type="EMBL" id="AB032010">
    <property type="protein sequence ID" value="BAB40451.2"/>
    <property type="molecule type" value="mRNA"/>
</dbReference>
<dbReference type="EMBL" id="AK003888">
    <property type="protein sequence ID" value="BAB23058.1"/>
    <property type="molecule type" value="mRNA"/>
</dbReference>
<dbReference type="EMBL" id="AK018354">
    <property type="protein sequence ID" value="BAB31174.1"/>
    <property type="molecule type" value="mRNA"/>
</dbReference>
<dbReference type="EMBL" id="BC042579">
    <property type="protein sequence ID" value="AAH42579.1"/>
    <property type="molecule type" value="mRNA"/>
</dbReference>
<dbReference type="EMBL" id="BC051127">
    <property type="protein sequence ID" value="AAH51127.1"/>
    <property type="molecule type" value="mRNA"/>
</dbReference>
<dbReference type="CCDS" id="CCDS23133.1">
    <molecule id="Q9D164-1"/>
</dbReference>
<dbReference type="RefSeq" id="NP_071287.1">
    <molecule id="Q9D164-1"/>
    <property type="nucleotide sequence ID" value="NM_022004.6"/>
</dbReference>
<dbReference type="RefSeq" id="XP_036011056.1">
    <molecule id="Q9D164-1"/>
    <property type="nucleotide sequence ID" value="XM_036155163.1"/>
</dbReference>
<dbReference type="RefSeq" id="XP_036011057.1">
    <molecule id="Q9D164-1"/>
    <property type="nucleotide sequence ID" value="XM_036155164.1"/>
</dbReference>
<dbReference type="SMR" id="Q9D164"/>
<dbReference type="FunCoup" id="Q9D164">
    <property type="interactions" value="102"/>
</dbReference>
<dbReference type="STRING" id="10090.ENSMUSP00000083101"/>
<dbReference type="PhosphoSitePlus" id="Q9D164"/>
<dbReference type="SwissPalm" id="Q9D164"/>
<dbReference type="PaxDb" id="10090-ENSMUSP00000083101"/>
<dbReference type="PeptideAtlas" id="Q9D164"/>
<dbReference type="ProteomicsDB" id="266894">
    <molecule id="Q9D164-1"/>
</dbReference>
<dbReference type="ProteomicsDB" id="266895">
    <molecule id="Q9D164-2"/>
</dbReference>
<dbReference type="Antibodypedia" id="45759">
    <property type="antibodies" value="126 antibodies from 22 providers"/>
</dbReference>
<dbReference type="DNASU" id="59095"/>
<dbReference type="Ensembl" id="ENSMUST00000085939.8">
    <molecule id="Q9D164-1"/>
    <property type="protein sequence ID" value="ENSMUSP00000083101.7"/>
    <property type="gene ID" value="ENSMUSG00000066705.8"/>
</dbReference>
<dbReference type="Ensembl" id="ENSMUST00000217381.2">
    <molecule id="Q9D164-2"/>
    <property type="protein sequence ID" value="ENSMUSP00000150813.2"/>
    <property type="gene ID" value="ENSMUSG00000066705.8"/>
</dbReference>
<dbReference type="GeneID" id="59095"/>
<dbReference type="KEGG" id="mmu:59095"/>
<dbReference type="UCSC" id="uc009pfs.1">
    <molecule id="Q9D164-1"/>
    <property type="organism name" value="mouse"/>
</dbReference>
<dbReference type="UCSC" id="uc009pft.1">
    <molecule id="Q9D164-2"/>
    <property type="organism name" value="mouse"/>
</dbReference>
<dbReference type="AGR" id="MGI:1890226"/>
<dbReference type="CTD" id="53826"/>
<dbReference type="MGI" id="MGI:1890226">
    <property type="gene designation" value="Fxyd6"/>
</dbReference>
<dbReference type="VEuPathDB" id="HostDB:ENSMUSG00000066705"/>
<dbReference type="eggNOG" id="ENOG502S570">
    <property type="taxonomic scope" value="Eukaryota"/>
</dbReference>
<dbReference type="GeneTree" id="ENSGT00940000153062"/>
<dbReference type="HOGENOM" id="CLU_171208_3_0_1"/>
<dbReference type="InParanoid" id="Q9D164"/>
<dbReference type="OMA" id="RCHCGAN"/>
<dbReference type="OrthoDB" id="8895254at2759"/>
<dbReference type="PhylomeDB" id="Q9D164"/>
<dbReference type="TreeFam" id="TF333443"/>
<dbReference type="Reactome" id="R-MMU-5578775">
    <property type="pathway name" value="Ion homeostasis"/>
</dbReference>
<dbReference type="Reactome" id="R-MMU-936837">
    <property type="pathway name" value="Ion transport by P-type ATPases"/>
</dbReference>
<dbReference type="BioGRID-ORCS" id="59095">
    <property type="hits" value="2 hits in 77 CRISPR screens"/>
</dbReference>
<dbReference type="ChiTaRS" id="Fxyd6">
    <property type="organism name" value="mouse"/>
</dbReference>
<dbReference type="PRO" id="PR:Q9D164"/>
<dbReference type="Proteomes" id="UP000000589">
    <property type="component" value="Chromosome 9"/>
</dbReference>
<dbReference type="RNAct" id="Q9D164">
    <property type="molecule type" value="protein"/>
</dbReference>
<dbReference type="Bgee" id="ENSMUSG00000066705">
    <property type="expression patterns" value="Expressed in extra-ocular muscle and 237 other cell types or tissues"/>
</dbReference>
<dbReference type="GO" id="GO:0098978">
    <property type="term" value="C:glutamatergic synapse"/>
    <property type="evidence" value="ECO:0000314"/>
    <property type="project" value="SynGO"/>
</dbReference>
<dbReference type="GO" id="GO:0045211">
    <property type="term" value="C:postsynaptic membrane"/>
    <property type="evidence" value="ECO:0000314"/>
    <property type="project" value="SynGO"/>
</dbReference>
<dbReference type="GO" id="GO:0042734">
    <property type="term" value="C:presynaptic membrane"/>
    <property type="evidence" value="ECO:0000314"/>
    <property type="project" value="SynGO"/>
</dbReference>
<dbReference type="GO" id="GO:0099106">
    <property type="term" value="F:ion channel regulator activity"/>
    <property type="evidence" value="ECO:0007669"/>
    <property type="project" value="InterPro"/>
</dbReference>
<dbReference type="GO" id="GO:0006813">
    <property type="term" value="P:potassium ion transport"/>
    <property type="evidence" value="ECO:0007669"/>
    <property type="project" value="UniProtKB-KW"/>
</dbReference>
<dbReference type="GO" id="GO:0043269">
    <property type="term" value="P:regulation of monoatomic ion transport"/>
    <property type="evidence" value="ECO:0007669"/>
    <property type="project" value="InterPro"/>
</dbReference>
<dbReference type="GO" id="GO:0006814">
    <property type="term" value="P:sodium ion transport"/>
    <property type="evidence" value="ECO:0007669"/>
    <property type="project" value="UniProtKB-KW"/>
</dbReference>
<dbReference type="FunFam" id="1.20.5.780:FF:000001">
    <property type="entry name" value="Fxyd domain-containing ion transport regulator"/>
    <property type="match status" value="1"/>
</dbReference>
<dbReference type="Gene3D" id="1.20.5.780">
    <property type="entry name" value="Single helix bin"/>
    <property type="match status" value="1"/>
</dbReference>
<dbReference type="InterPro" id="IPR047297">
    <property type="entry name" value="FXYD_motif"/>
</dbReference>
<dbReference type="InterPro" id="IPR000272">
    <property type="entry name" value="Ion-transport_regulator_FXYD"/>
</dbReference>
<dbReference type="PANTHER" id="PTHR14132:SF15">
    <property type="entry name" value="FXYD DOMAIN-CONTAINING ION TRANSPORT REGULATOR 6-RELATED"/>
    <property type="match status" value="1"/>
</dbReference>
<dbReference type="PANTHER" id="PTHR14132">
    <property type="entry name" value="SODIUM/POTASSIUM-TRANSPORTING ATPASE SUBUNIT GAMMA"/>
    <property type="match status" value="1"/>
</dbReference>
<dbReference type="Pfam" id="PF02038">
    <property type="entry name" value="ATP1G1_PLM_MAT8"/>
    <property type="match status" value="1"/>
</dbReference>
<dbReference type="PROSITE" id="PS01310">
    <property type="entry name" value="FXYD"/>
    <property type="match status" value="1"/>
</dbReference>
<name>FXYD6_MOUSE</name>
<gene>
    <name type="primary">Fxyd6</name>
    <name type="synonym">Plp</name>
</gene>